<sequence>MEKKIDFKPDSYLIRSGNNFLGILNDIKRRPEDAANELGVSIEEINSIISGKQKISPSLIEKAVNIWPVNERDFYIVSDDCSSGILIMTSQDSIKSSRIMERAGKPYYEYRDTAMSKTAPFRPEWILELCKVENNDPENPKAQWNNGHFMHQFTYFIGEVNFYYKDPEGKKHVAIMNTGDSMYITPFTPHTFTTRDGASQNGLILALTYGSKLTGDIQQELSSLSLDCGSQYALDFTNHENASLSLLEYYFELSNLTKEKFAKRTNFSMETLADFFTKKKLPTFDELKIIAKALNVNSRDLMPNDLTESKVIVKTHDQCDHWKYPESGNYEFYELASTTALPHSKAFEIDVSSSEDLNLDLKVGLHQYVYNIGDSALTINWNYENKTYQKSLNPGDSAYIKPFVPHNFRGNGKILILRIGGKISGDSQRELSFVGRENTQRAISETMQWFDPKGSNS</sequence>
<accession>A9A1T2</accession>
<gene>
    <name type="primary">mpnS</name>
    <name type="ordered locus">Nmar_0155</name>
</gene>
<keyword id="KW-0002">3D-structure</keyword>
<keyword id="KW-0223">Dioxygenase</keyword>
<keyword id="KW-0238">DNA-binding</keyword>
<keyword id="KW-0408">Iron</keyword>
<keyword id="KW-0479">Metal-binding</keyword>
<keyword id="KW-0560">Oxidoreductase</keyword>
<keyword id="KW-1185">Reference proteome</keyword>
<keyword id="KW-0677">Repeat</keyword>
<evidence type="ECO:0000250" key="1"/>
<evidence type="ECO:0000255" key="2">
    <source>
        <dbReference type="PROSITE-ProRule" id="PRU00257"/>
    </source>
</evidence>
<evidence type="ECO:0000269" key="3">
    <source>
    </source>
</evidence>
<evidence type="ECO:0000305" key="4"/>
<evidence type="ECO:0000305" key="5">
    <source>
    </source>
</evidence>
<evidence type="ECO:0007829" key="6">
    <source>
        <dbReference type="PDB" id="6B9T"/>
    </source>
</evidence>
<proteinExistence type="evidence at protein level"/>
<comment type="function">
    <text evidence="3">Catalyzes the conversion of 2-hydroxyethylphosphonate into methylphosphonate in the methylphosphonate biosynthesis pathway.</text>
</comment>
<comment type="catalytic activity">
    <reaction evidence="3">
        <text>2-hydroxyethylphosphonate + O2 = methylphosphonate + hydrogencarbonate + H(+)</text>
        <dbReference type="Rhea" id="RHEA:34615"/>
        <dbReference type="ChEBI" id="CHEBI:15378"/>
        <dbReference type="ChEBI" id="CHEBI:15379"/>
        <dbReference type="ChEBI" id="CHEBI:17544"/>
        <dbReference type="ChEBI" id="CHEBI:60991"/>
        <dbReference type="ChEBI" id="CHEBI:68684"/>
        <dbReference type="EC" id="1.13.11.73"/>
    </reaction>
</comment>
<comment type="cofactor">
    <cofactor evidence="3">
        <name>Fe(2+)</name>
        <dbReference type="ChEBI" id="CHEBI:29033"/>
    </cofactor>
</comment>
<comment type="pathway">
    <text evidence="3">Phosphorus metabolism; phosphonate biosynthesis.</text>
</comment>
<comment type="miscellaneous">
    <text evidence="5">The existence of the methylphosphonate biosynthesis pathway in marine microbes may explain the supersaturation of the aerobic ocean with methane. Methane is probably released following degradation of methylphosphonate produced by MpnS (PubMed:22936780).</text>
</comment>
<comment type="similarity">
    <text evidence="4">Belongs to the non-heme iron-dependent dioxygenase family.</text>
</comment>
<comment type="online information" name="Protein Spotlight">
    <link uri="https://www.proteinspotlight.org/back_issues/160/"/>
    <text>An unusual chemistry - Issue 160 of May 2014</text>
</comment>
<protein>
    <recommendedName>
        <fullName>Methylphosphonate synthase</fullName>
        <ecNumber>1.13.11.73</ecNumber>
    </recommendedName>
</protein>
<organism>
    <name type="scientific">Nitrosopumilus maritimus (strain SCM1)</name>
    <dbReference type="NCBI Taxonomy" id="436308"/>
    <lineage>
        <taxon>Archaea</taxon>
        <taxon>Nitrososphaerota</taxon>
        <taxon>Nitrososphaeria</taxon>
        <taxon>Nitrosopumilales</taxon>
        <taxon>Nitrosopumilaceae</taxon>
        <taxon>Nitrosopumilus</taxon>
    </lineage>
</organism>
<reference key="1">
    <citation type="journal article" date="2010" name="Proc. Natl. Acad. Sci. U.S.A.">
        <title>Nitrosopumilus maritimus genome reveals unique mechanisms for nitrification and autotrophy in globally distributed marine crenarchaea.</title>
        <authorList>
            <person name="Walker C.B."/>
            <person name="de la Torre J.R."/>
            <person name="Klotz M.G."/>
            <person name="Urakawa H."/>
            <person name="Pinel N."/>
            <person name="Arp D.J."/>
            <person name="Brochier-Armanet C."/>
            <person name="Chain P.S."/>
            <person name="Chan P.P."/>
            <person name="Gollabgir A."/>
            <person name="Hemp J."/>
            <person name="Hugler M."/>
            <person name="Karr E.A."/>
            <person name="Konneke M."/>
            <person name="Shin M."/>
            <person name="Lawton T.J."/>
            <person name="Lowe T."/>
            <person name="Martens-Habbena W."/>
            <person name="Sayavedra-Soto L.A."/>
            <person name="Lang D."/>
            <person name="Sievert S.M."/>
            <person name="Rosenzweig A.C."/>
            <person name="Manning G."/>
            <person name="Stahl D.A."/>
        </authorList>
    </citation>
    <scope>NUCLEOTIDE SEQUENCE [LARGE SCALE GENOMIC DNA]</scope>
    <source>
        <strain>SCM1</strain>
    </source>
</reference>
<reference key="2">
    <citation type="journal article" date="2012" name="Science">
        <title>Synthesis of methylphosphonic acid by marine microbes: a source for methane in the aerobic ocean.</title>
        <authorList>
            <person name="Metcalf W.W."/>
            <person name="Griffin B.M."/>
            <person name="Cicchillo R.M."/>
            <person name="Gao J."/>
            <person name="Janga S.C."/>
            <person name="Cooke H.A."/>
            <person name="Circello B.T."/>
            <person name="Evans B.S."/>
            <person name="Martens-Habbena W."/>
            <person name="Stahl D.A."/>
            <person name="van der Donk W.A."/>
        </authorList>
    </citation>
    <scope>FUNCTION</scope>
    <scope>CATALYTIC ACTIVITY</scope>
    <scope>PATHWAY</scope>
    <scope>COFACTOR</scope>
    <source>
        <strain>SCM1</strain>
    </source>
</reference>
<dbReference type="EC" id="1.13.11.73"/>
<dbReference type="EMBL" id="CP000866">
    <property type="protein sequence ID" value="ABX12053.1"/>
    <property type="molecule type" value="Genomic_DNA"/>
</dbReference>
<dbReference type="RefSeq" id="WP_012214540.1">
    <property type="nucleotide sequence ID" value="NC_010085.1"/>
</dbReference>
<dbReference type="PDB" id="6B9S">
    <property type="method" value="X-ray"/>
    <property type="resolution" value="2.37 A"/>
    <property type="chains" value="A/B/C/D/E/F/G/H=1-457"/>
</dbReference>
<dbReference type="PDB" id="6B9T">
    <property type="method" value="X-ray"/>
    <property type="resolution" value="2.35 A"/>
    <property type="chains" value="A/B/C/D/E/F/G/H=1-457"/>
</dbReference>
<dbReference type="PDBsum" id="6B9S"/>
<dbReference type="PDBsum" id="6B9T"/>
<dbReference type="SMR" id="A9A1T2"/>
<dbReference type="STRING" id="436308.Nmar_0155"/>
<dbReference type="EnsemblBacteria" id="ABX12053">
    <property type="protein sequence ID" value="ABX12053"/>
    <property type="gene ID" value="Nmar_0155"/>
</dbReference>
<dbReference type="GeneID" id="5773758"/>
<dbReference type="KEGG" id="nmr:Nmar_0155"/>
<dbReference type="eggNOG" id="arCOG01865">
    <property type="taxonomic scope" value="Archaea"/>
</dbReference>
<dbReference type="HOGENOM" id="CLU_598026_0_0_2"/>
<dbReference type="InParanoid" id="A9A1T2"/>
<dbReference type="OrthoDB" id="3125at2157"/>
<dbReference type="BioCyc" id="MetaCyc:MONOMER-17793"/>
<dbReference type="UniPathway" id="UPA00960"/>
<dbReference type="Proteomes" id="UP000000792">
    <property type="component" value="Chromosome"/>
</dbReference>
<dbReference type="GO" id="GO:0003677">
    <property type="term" value="F:DNA binding"/>
    <property type="evidence" value="ECO:0007669"/>
    <property type="project" value="UniProtKB-KW"/>
</dbReference>
<dbReference type="GO" id="GO:0003700">
    <property type="term" value="F:DNA-binding transcription factor activity"/>
    <property type="evidence" value="ECO:0000318"/>
    <property type="project" value="GO_Central"/>
</dbReference>
<dbReference type="GO" id="GO:0008198">
    <property type="term" value="F:ferrous iron binding"/>
    <property type="evidence" value="ECO:0000314"/>
    <property type="project" value="UniProtKB"/>
</dbReference>
<dbReference type="GO" id="GO:0016702">
    <property type="term" value="F:oxidoreductase activity, acting on single donors with incorporation of molecular oxygen, incorporation of two atoms of oxygen"/>
    <property type="evidence" value="ECO:0000314"/>
    <property type="project" value="UniProtKB"/>
</dbReference>
<dbReference type="GO" id="GO:0032923">
    <property type="term" value="P:organic phosphonate biosynthetic process"/>
    <property type="evidence" value="ECO:0000314"/>
    <property type="project" value="UniProtKB"/>
</dbReference>
<dbReference type="GO" id="GO:0006355">
    <property type="term" value="P:regulation of DNA-templated transcription"/>
    <property type="evidence" value="ECO:0000318"/>
    <property type="project" value="GO_Central"/>
</dbReference>
<dbReference type="CDD" id="cd00093">
    <property type="entry name" value="HTH_XRE"/>
    <property type="match status" value="1"/>
</dbReference>
<dbReference type="FunFam" id="2.60.120.10:FF:000382">
    <property type="entry name" value="(S)-2-hydroxypropylphosphonic acid epoxidase"/>
    <property type="match status" value="1"/>
</dbReference>
<dbReference type="Gene3D" id="2.60.120.10">
    <property type="entry name" value="Jelly Rolls"/>
    <property type="match status" value="2"/>
</dbReference>
<dbReference type="Gene3D" id="1.10.260.40">
    <property type="entry name" value="lambda repressor-like DNA-binding domains"/>
    <property type="match status" value="1"/>
</dbReference>
<dbReference type="InterPro" id="IPR050807">
    <property type="entry name" value="Bact_TransReg_Diox"/>
</dbReference>
<dbReference type="InterPro" id="IPR001387">
    <property type="entry name" value="Cro/C1-type_HTH"/>
</dbReference>
<dbReference type="InterPro" id="IPR010982">
    <property type="entry name" value="Lambda_DNA-bd_dom_sf"/>
</dbReference>
<dbReference type="InterPro" id="IPR014710">
    <property type="entry name" value="RmlC-like_jellyroll"/>
</dbReference>
<dbReference type="InterPro" id="IPR011051">
    <property type="entry name" value="RmlC_Cupin_sf"/>
</dbReference>
<dbReference type="PANTHER" id="PTHR46797">
    <property type="entry name" value="HTH-TYPE TRANSCRIPTIONAL REGULATOR"/>
    <property type="match status" value="1"/>
</dbReference>
<dbReference type="PANTHER" id="PTHR46797:SF1">
    <property type="entry name" value="METHYLPHOSPHONATE SYNTHASE"/>
    <property type="match status" value="1"/>
</dbReference>
<dbReference type="Pfam" id="PF01381">
    <property type="entry name" value="HTH_3"/>
    <property type="match status" value="1"/>
</dbReference>
<dbReference type="SMART" id="SM00530">
    <property type="entry name" value="HTH_XRE"/>
    <property type="match status" value="2"/>
</dbReference>
<dbReference type="SUPFAM" id="SSF47413">
    <property type="entry name" value="lambda repressor-like DNA-binding domains"/>
    <property type="match status" value="1"/>
</dbReference>
<dbReference type="SUPFAM" id="SSF51182">
    <property type="entry name" value="RmlC-like cupins"/>
    <property type="match status" value="1"/>
</dbReference>
<dbReference type="PROSITE" id="PS50943">
    <property type="entry name" value="HTH_CROC1"/>
    <property type="match status" value="1"/>
</dbReference>
<name>MPNS_NITMS</name>
<feature type="chain" id="PRO_0000422033" description="Methylphosphonate synthase">
    <location>
        <begin position="1"/>
        <end position="457"/>
    </location>
</feature>
<feature type="domain" description="HTH cro/C1-type 1" evidence="2">
    <location>
        <begin position="23"/>
        <end position="74"/>
    </location>
</feature>
<feature type="domain" description="HTH cro/C1-type 2" evidence="2">
    <location>
        <begin position="247"/>
        <end position="301"/>
    </location>
</feature>
<feature type="DNA-binding region" description="H-T-H motif" evidence="2">
    <location>
        <begin position="32"/>
        <end position="50"/>
    </location>
</feature>
<feature type="DNA-binding region" description="H-T-H motif" evidence="2">
    <location>
        <begin position="258"/>
        <end position="277"/>
    </location>
</feature>
<feature type="binding site" evidence="1">
    <location>
        <position position="148"/>
    </location>
    <ligand>
        <name>Fe cation</name>
        <dbReference type="ChEBI" id="CHEBI:24875"/>
    </ligand>
</feature>
<feature type="binding site" evidence="1">
    <location>
        <position position="190"/>
    </location>
    <ligand>
        <name>Fe cation</name>
        <dbReference type="ChEBI" id="CHEBI:24875"/>
    </ligand>
</feature>
<feature type="helix" evidence="6">
    <location>
        <begin position="11"/>
        <end position="26"/>
    </location>
</feature>
<feature type="helix" evidence="6">
    <location>
        <begin position="31"/>
        <end position="38"/>
    </location>
</feature>
<feature type="helix" evidence="6">
    <location>
        <begin position="42"/>
        <end position="49"/>
    </location>
</feature>
<feature type="helix" evidence="6">
    <location>
        <begin position="57"/>
        <end position="66"/>
    </location>
</feature>
<feature type="helix" evidence="6">
    <location>
        <begin position="71"/>
        <end position="74"/>
    </location>
</feature>
<feature type="strand" evidence="6">
    <location>
        <begin position="84"/>
        <end position="88"/>
    </location>
</feature>
<feature type="helix" evidence="6">
    <location>
        <begin position="90"/>
        <end position="95"/>
    </location>
</feature>
<feature type="strand" evidence="6">
    <location>
        <begin position="98"/>
        <end position="102"/>
    </location>
</feature>
<feature type="strand" evidence="6">
    <location>
        <begin position="105"/>
        <end position="112"/>
    </location>
</feature>
<feature type="strand" evidence="6">
    <location>
        <begin position="121"/>
        <end position="128"/>
    </location>
</feature>
<feature type="strand" evidence="6">
    <location>
        <begin position="131"/>
        <end position="134"/>
    </location>
</feature>
<feature type="strand" evidence="6">
    <location>
        <begin position="149"/>
        <end position="165"/>
    </location>
</feature>
<feature type="strand" evidence="6">
    <location>
        <begin position="171"/>
        <end position="176"/>
    </location>
</feature>
<feature type="strand" evidence="6">
    <location>
        <begin position="181"/>
        <end position="184"/>
    </location>
</feature>
<feature type="strand" evidence="6">
    <location>
        <begin position="190"/>
        <end position="195"/>
    </location>
</feature>
<feature type="strand" evidence="6">
    <location>
        <begin position="203"/>
        <end position="209"/>
    </location>
</feature>
<feature type="strand" evidence="6">
    <location>
        <begin position="212"/>
        <end position="214"/>
    </location>
</feature>
<feature type="helix" evidence="6">
    <location>
        <begin position="216"/>
        <end position="222"/>
    </location>
</feature>
<feature type="helix" evidence="6">
    <location>
        <begin position="226"/>
        <end position="230"/>
    </location>
</feature>
<feature type="helix" evidence="6">
    <location>
        <begin position="239"/>
        <end position="254"/>
    </location>
</feature>
<feature type="helix" evidence="6">
    <location>
        <begin position="258"/>
        <end position="265"/>
    </location>
</feature>
<feature type="helix" evidence="6">
    <location>
        <begin position="269"/>
        <end position="276"/>
    </location>
</feature>
<feature type="helix" evidence="6">
    <location>
        <begin position="284"/>
        <end position="293"/>
    </location>
</feature>
<feature type="helix" evidence="6">
    <location>
        <begin position="298"/>
        <end position="301"/>
    </location>
</feature>
<feature type="strand" evidence="6">
    <location>
        <begin position="310"/>
        <end position="314"/>
    </location>
</feature>
<feature type="helix" evidence="6">
    <location>
        <begin position="316"/>
        <end position="318"/>
    </location>
</feature>
<feature type="strand" evidence="6">
    <location>
        <begin position="321"/>
        <end position="325"/>
    </location>
</feature>
<feature type="strand" evidence="6">
    <location>
        <begin position="329"/>
        <end position="334"/>
    </location>
</feature>
<feature type="strand" evidence="6">
    <location>
        <begin position="345"/>
        <end position="353"/>
    </location>
</feature>
<feature type="strand" evidence="6">
    <location>
        <begin position="364"/>
        <end position="371"/>
    </location>
</feature>
<feature type="strand" evidence="6">
    <location>
        <begin position="373"/>
        <end position="375"/>
    </location>
</feature>
<feature type="strand" evidence="6">
    <location>
        <begin position="377"/>
        <end position="382"/>
    </location>
</feature>
<feature type="strand" evidence="6">
    <location>
        <begin position="387"/>
        <end position="392"/>
    </location>
</feature>
<feature type="strand" evidence="6">
    <location>
        <begin position="397"/>
        <end position="400"/>
    </location>
</feature>
<feature type="strand" evidence="6">
    <location>
        <begin position="406"/>
        <end position="419"/>
    </location>
</feature>
<feature type="turn" evidence="6">
    <location>
        <begin position="421"/>
        <end position="425"/>
    </location>
</feature>
<feature type="helix" evidence="6">
    <location>
        <begin position="426"/>
        <end position="434"/>
    </location>
</feature>
<feature type="helix" evidence="6">
    <location>
        <begin position="436"/>
        <end position="438"/>
    </location>
</feature>
<feature type="helix" evidence="6">
    <location>
        <begin position="439"/>
        <end position="443"/>
    </location>
</feature>